<evidence type="ECO:0000255" key="1">
    <source>
        <dbReference type="HAMAP-Rule" id="MF_01358"/>
    </source>
</evidence>
<proteinExistence type="inferred from homology"/>
<sequence>MGEVKLFFGPNHPGMHGNFSVHMYVEGDTVVKARPLPGFLHRGFEKLMERRLWYQNLALIPRICVPEPDINELCYALAVEKIAKIDVPERAQWIRMIVLELARIANHLWSFSGIGGPIGLYTGSFWGTADRDRILDIFENLTGARVYHMYIVPGGVRKDLTPKIEKMILETLDYIESRLPDYEKLILKNRIVHTRLKGIAKLDRETALEMGVTGVGLRATGVPYDIRKVDPYLFYDKVDFEVPFSTDGDAFARVYLKFREIFQSIKIVKQALEKMPVGKVNTPISEGSALRFRVPKGQAYVHIESTRGEYGYYMVSDGGEKPYRVVVRGASYPQTFIGVEKYLPGTRIEDVPIWLSTMDVCAPEVDR</sequence>
<organism>
    <name type="scientific">Thermosipho melanesiensis (strain DSM 12029 / CIP 104789 / BI429)</name>
    <dbReference type="NCBI Taxonomy" id="391009"/>
    <lineage>
        <taxon>Bacteria</taxon>
        <taxon>Thermotogati</taxon>
        <taxon>Thermotogota</taxon>
        <taxon>Thermotogae</taxon>
        <taxon>Thermotogales</taxon>
        <taxon>Fervidobacteriaceae</taxon>
        <taxon>Thermosipho</taxon>
    </lineage>
</organism>
<accession>A6LMC4</accession>
<protein>
    <recommendedName>
        <fullName evidence="1">NADH-quinone oxidoreductase subunit D</fullName>
        <ecNumber evidence="1">7.1.1.-</ecNumber>
    </recommendedName>
    <alternativeName>
        <fullName evidence="1">NADH dehydrogenase I subunit D</fullName>
    </alternativeName>
    <alternativeName>
        <fullName evidence="1">NDH-1 subunit D</fullName>
    </alternativeName>
</protein>
<comment type="function">
    <text evidence="1">NDH-1 shuttles electrons from NADH, via FMN and iron-sulfur (Fe-S) centers, to quinones in the respiratory chain. The immediate electron acceptor for the enzyme in this species is believed to be ubiquinone. Couples the redox reaction to proton translocation (for every two electrons transferred, four hydrogen ions are translocated across the cytoplasmic membrane), and thus conserves the redox energy in a proton gradient.</text>
</comment>
<comment type="catalytic activity">
    <reaction evidence="1">
        <text>a quinone + NADH + 5 H(+)(in) = a quinol + NAD(+) + 4 H(+)(out)</text>
        <dbReference type="Rhea" id="RHEA:57888"/>
        <dbReference type="ChEBI" id="CHEBI:15378"/>
        <dbReference type="ChEBI" id="CHEBI:24646"/>
        <dbReference type="ChEBI" id="CHEBI:57540"/>
        <dbReference type="ChEBI" id="CHEBI:57945"/>
        <dbReference type="ChEBI" id="CHEBI:132124"/>
    </reaction>
</comment>
<comment type="subunit">
    <text evidence="1">NDH-1 is composed of 14 different subunits. Subunits NuoB, C, D, E, F, and G constitute the peripheral sector of the complex.</text>
</comment>
<comment type="subcellular location">
    <subcellularLocation>
        <location evidence="1">Cell inner membrane</location>
        <topology evidence="1">Peripheral membrane protein</topology>
        <orientation evidence="1">Cytoplasmic side</orientation>
    </subcellularLocation>
</comment>
<comment type="similarity">
    <text evidence="1">Belongs to the complex I 49 kDa subunit family.</text>
</comment>
<feature type="chain" id="PRO_0000357948" description="NADH-quinone oxidoreductase subunit D">
    <location>
        <begin position="1"/>
        <end position="367"/>
    </location>
</feature>
<name>NUOD_THEM4</name>
<dbReference type="EC" id="7.1.1.-" evidence="1"/>
<dbReference type="EMBL" id="CP000716">
    <property type="protein sequence ID" value="ABR31075.1"/>
    <property type="molecule type" value="Genomic_DNA"/>
</dbReference>
<dbReference type="RefSeq" id="WP_012057434.1">
    <property type="nucleotide sequence ID" value="NC_009616.1"/>
</dbReference>
<dbReference type="SMR" id="A6LMC4"/>
<dbReference type="STRING" id="391009.Tmel_1221"/>
<dbReference type="KEGG" id="tme:Tmel_1221"/>
<dbReference type="eggNOG" id="COG0649">
    <property type="taxonomic scope" value="Bacteria"/>
</dbReference>
<dbReference type="HOGENOM" id="CLU_015134_1_2_0"/>
<dbReference type="OrthoDB" id="9801496at2"/>
<dbReference type="Proteomes" id="UP000001110">
    <property type="component" value="Chromosome"/>
</dbReference>
<dbReference type="GO" id="GO:0005886">
    <property type="term" value="C:plasma membrane"/>
    <property type="evidence" value="ECO:0007669"/>
    <property type="project" value="UniProtKB-SubCell"/>
</dbReference>
<dbReference type="GO" id="GO:0051287">
    <property type="term" value="F:NAD binding"/>
    <property type="evidence" value="ECO:0007669"/>
    <property type="project" value="InterPro"/>
</dbReference>
<dbReference type="GO" id="GO:0050136">
    <property type="term" value="F:NADH:ubiquinone reductase (non-electrogenic) activity"/>
    <property type="evidence" value="ECO:0007669"/>
    <property type="project" value="UniProtKB-UniRule"/>
</dbReference>
<dbReference type="GO" id="GO:0048038">
    <property type="term" value="F:quinone binding"/>
    <property type="evidence" value="ECO:0007669"/>
    <property type="project" value="UniProtKB-KW"/>
</dbReference>
<dbReference type="Gene3D" id="1.10.645.10">
    <property type="entry name" value="Cytochrome-c3 Hydrogenase, chain B"/>
    <property type="match status" value="1"/>
</dbReference>
<dbReference type="HAMAP" id="MF_01358">
    <property type="entry name" value="NDH1_NuoD"/>
    <property type="match status" value="1"/>
</dbReference>
<dbReference type="InterPro" id="IPR001135">
    <property type="entry name" value="NADH_Q_OxRdtase_suD"/>
</dbReference>
<dbReference type="InterPro" id="IPR014029">
    <property type="entry name" value="NADH_UbQ_OxRdtase_49kDa_CS"/>
</dbReference>
<dbReference type="InterPro" id="IPR022885">
    <property type="entry name" value="NDH1_su_D/H"/>
</dbReference>
<dbReference type="InterPro" id="IPR029014">
    <property type="entry name" value="NiFe-Hase_large"/>
</dbReference>
<dbReference type="NCBIfam" id="NF004739">
    <property type="entry name" value="PRK06075.1"/>
    <property type="match status" value="1"/>
</dbReference>
<dbReference type="PANTHER" id="PTHR11993:SF10">
    <property type="entry name" value="NADH DEHYDROGENASE [UBIQUINONE] IRON-SULFUR PROTEIN 2, MITOCHONDRIAL"/>
    <property type="match status" value="1"/>
</dbReference>
<dbReference type="PANTHER" id="PTHR11993">
    <property type="entry name" value="NADH-UBIQUINONE OXIDOREDUCTASE 49 KDA SUBUNIT"/>
    <property type="match status" value="1"/>
</dbReference>
<dbReference type="Pfam" id="PF00346">
    <property type="entry name" value="Complex1_49kDa"/>
    <property type="match status" value="2"/>
</dbReference>
<dbReference type="SUPFAM" id="SSF56762">
    <property type="entry name" value="HydB/Nqo4-like"/>
    <property type="match status" value="1"/>
</dbReference>
<dbReference type="PROSITE" id="PS00535">
    <property type="entry name" value="COMPLEX1_49K"/>
    <property type="match status" value="1"/>
</dbReference>
<keyword id="KW-0997">Cell inner membrane</keyword>
<keyword id="KW-1003">Cell membrane</keyword>
<keyword id="KW-0472">Membrane</keyword>
<keyword id="KW-0520">NAD</keyword>
<keyword id="KW-0874">Quinone</keyword>
<keyword id="KW-1278">Translocase</keyword>
<keyword id="KW-0813">Transport</keyword>
<keyword id="KW-0830">Ubiquinone</keyword>
<reference key="1">
    <citation type="submission" date="2007-05" db="EMBL/GenBank/DDBJ databases">
        <title>Complete sequence of Thermosipho melanesiensis BI429.</title>
        <authorList>
            <consortium name="US DOE Joint Genome Institute"/>
            <person name="Copeland A."/>
            <person name="Lucas S."/>
            <person name="Lapidus A."/>
            <person name="Barry K."/>
            <person name="Glavina del Rio T."/>
            <person name="Dalin E."/>
            <person name="Tice H."/>
            <person name="Pitluck S."/>
            <person name="Chertkov O."/>
            <person name="Brettin T."/>
            <person name="Bruce D."/>
            <person name="Detter J.C."/>
            <person name="Han C."/>
            <person name="Schmutz J."/>
            <person name="Larimer F."/>
            <person name="Land M."/>
            <person name="Hauser L."/>
            <person name="Kyrpides N."/>
            <person name="Mikhailova N."/>
            <person name="Nelson K."/>
            <person name="Gogarten J.P."/>
            <person name="Noll K."/>
            <person name="Richardson P."/>
        </authorList>
    </citation>
    <scope>NUCLEOTIDE SEQUENCE [LARGE SCALE GENOMIC DNA]</scope>
    <source>
        <strain>DSM 12029 / CIP 104789 / BI429</strain>
    </source>
</reference>
<gene>
    <name evidence="1" type="primary">nuoD</name>
    <name type="ordered locus">Tmel_1221</name>
</gene>